<accession>Q9W0K0</accession>
<accession>Q8IGG5</accession>
<accession>Q9NH69</accession>
<dbReference type="EMBL" id="AF220194">
    <property type="protein sequence ID" value="AAL50332.1"/>
    <property type="molecule type" value="mRNA"/>
</dbReference>
<dbReference type="EMBL" id="AF231037">
    <property type="protein sequence ID" value="AAF34806.1"/>
    <property type="molecule type" value="mRNA"/>
</dbReference>
<dbReference type="EMBL" id="AE014296">
    <property type="protein sequence ID" value="AAF47446.1"/>
    <property type="molecule type" value="Genomic_DNA"/>
</dbReference>
<dbReference type="EMBL" id="AE014296">
    <property type="protein sequence ID" value="AAN11462.1"/>
    <property type="molecule type" value="Genomic_DNA"/>
</dbReference>
<dbReference type="EMBL" id="AY051495">
    <property type="protein sequence ID" value="AAK92919.1"/>
    <property type="molecule type" value="mRNA"/>
</dbReference>
<dbReference type="EMBL" id="BT001795">
    <property type="protein sequence ID" value="AAN71550.1"/>
    <property type="molecule type" value="mRNA"/>
</dbReference>
<dbReference type="RefSeq" id="NP_728573.1">
    <molecule id="Q9W0K0-1"/>
    <property type="nucleotide sequence ID" value="NM_167856.3"/>
</dbReference>
<dbReference type="RefSeq" id="NP_728574.1">
    <molecule id="Q9W0K0-2"/>
    <property type="nucleotide sequence ID" value="NM_167857.4"/>
</dbReference>
<dbReference type="PDB" id="4Z88">
    <property type="method" value="X-ray"/>
    <property type="resolution" value="2.09 A"/>
    <property type="chains" value="M/N/O/P/Q/R/S/T/U/V/W/X=149-163"/>
</dbReference>
<dbReference type="PDBsum" id="4Z88"/>
<dbReference type="SMR" id="Q9W0K0"/>
<dbReference type="BioGRID" id="72744">
    <property type="interactions" value="13"/>
</dbReference>
<dbReference type="DIP" id="DIP-20311N"/>
<dbReference type="FunCoup" id="Q9W0K0">
    <property type="interactions" value="62"/>
</dbReference>
<dbReference type="IntAct" id="Q9W0K0">
    <property type="interactions" value="3"/>
</dbReference>
<dbReference type="STRING" id="7227.FBpp0072523"/>
<dbReference type="PaxDb" id="7227-FBpp0072523"/>
<dbReference type="DNASU" id="53472"/>
<dbReference type="EnsemblMetazoa" id="FBtr0072626">
    <molecule id="Q9W0K0-2"/>
    <property type="protein sequence ID" value="FBpp0072522"/>
    <property type="gene ID" value="FBgn0040281"/>
</dbReference>
<dbReference type="EnsemblMetazoa" id="FBtr0072627">
    <molecule id="Q9W0K0-1"/>
    <property type="protein sequence ID" value="FBpp0072523"/>
    <property type="gene ID" value="FBgn0040281"/>
</dbReference>
<dbReference type="GeneID" id="53472"/>
<dbReference type="KEGG" id="dme:Dmel_CG1200"/>
<dbReference type="AGR" id="FB:FBgn0040281"/>
<dbReference type="CTD" id="53472"/>
<dbReference type="FlyBase" id="FBgn0040281">
    <property type="gene designation" value="Aplip1"/>
</dbReference>
<dbReference type="VEuPathDB" id="VectorBase:FBgn0040281"/>
<dbReference type="eggNOG" id="KOG3775">
    <property type="taxonomic scope" value="Eukaryota"/>
</dbReference>
<dbReference type="GeneTree" id="ENSGT00940000169182"/>
<dbReference type="InParanoid" id="Q9W0K0"/>
<dbReference type="OMA" id="TAHSPEN"/>
<dbReference type="OrthoDB" id="5965083at2759"/>
<dbReference type="PhylomeDB" id="Q9W0K0"/>
<dbReference type="SignaLink" id="Q9W0K0"/>
<dbReference type="BioGRID-ORCS" id="53472">
    <property type="hits" value="0 hits in 3 CRISPR screens"/>
</dbReference>
<dbReference type="EvolutionaryTrace" id="Q9W0K0"/>
<dbReference type="GenomeRNAi" id="53472"/>
<dbReference type="PRO" id="PR:Q9W0K0"/>
<dbReference type="Proteomes" id="UP000000803">
    <property type="component" value="Chromosome 3L"/>
</dbReference>
<dbReference type="Bgee" id="FBgn0040281">
    <property type="expression patterns" value="Expressed in T neuron T4c (Drosophila) in embryonic/larval optic lobe (Drosophila) and 141 other cell types or tissues"/>
</dbReference>
<dbReference type="GO" id="GO:0030424">
    <property type="term" value="C:axon"/>
    <property type="evidence" value="ECO:0000314"/>
    <property type="project" value="FlyBase"/>
</dbReference>
<dbReference type="GO" id="GO:1904115">
    <property type="term" value="C:axon cytoplasm"/>
    <property type="evidence" value="ECO:0007669"/>
    <property type="project" value="GOC"/>
</dbReference>
<dbReference type="GO" id="GO:0042802">
    <property type="term" value="F:identical protein binding"/>
    <property type="evidence" value="ECO:0000353"/>
    <property type="project" value="IntAct"/>
</dbReference>
<dbReference type="GO" id="GO:0019894">
    <property type="term" value="F:kinesin binding"/>
    <property type="evidence" value="ECO:0000353"/>
    <property type="project" value="UniProtKB"/>
</dbReference>
<dbReference type="GO" id="GO:0005078">
    <property type="term" value="F:MAP-kinase scaffold activity"/>
    <property type="evidence" value="ECO:0000353"/>
    <property type="project" value="UniProtKB"/>
</dbReference>
<dbReference type="GO" id="GO:0019901">
    <property type="term" value="F:protein kinase binding"/>
    <property type="evidence" value="ECO:0000353"/>
    <property type="project" value="UniProtKB"/>
</dbReference>
<dbReference type="GO" id="GO:0048490">
    <property type="term" value="P:anterograde synaptic vesicle transport"/>
    <property type="evidence" value="ECO:0000315"/>
    <property type="project" value="FlyBase"/>
</dbReference>
<dbReference type="GO" id="GO:0019896">
    <property type="term" value="P:axonal transport of mitochondrion"/>
    <property type="evidence" value="ECO:0000315"/>
    <property type="project" value="FlyBase"/>
</dbReference>
<dbReference type="GO" id="GO:0007254">
    <property type="term" value="P:JNK cascade"/>
    <property type="evidence" value="ECO:0000247"/>
    <property type="project" value="FlyBase"/>
</dbReference>
<dbReference type="GO" id="GO:0046328">
    <property type="term" value="P:regulation of JNK cascade"/>
    <property type="evidence" value="ECO:0000353"/>
    <property type="project" value="FlyBase"/>
</dbReference>
<dbReference type="GO" id="GO:2000331">
    <property type="term" value="P:regulation of terminal button organization"/>
    <property type="evidence" value="ECO:0000315"/>
    <property type="project" value="FlyBase"/>
</dbReference>
<dbReference type="GO" id="GO:0048491">
    <property type="term" value="P:retrograde synaptic vesicle transport"/>
    <property type="evidence" value="ECO:0000315"/>
    <property type="project" value="FlyBase"/>
</dbReference>
<dbReference type="CDD" id="cd01212">
    <property type="entry name" value="PTB_JIP"/>
    <property type="match status" value="1"/>
</dbReference>
<dbReference type="CDD" id="cd11801">
    <property type="entry name" value="SH3_JIP1_like"/>
    <property type="match status" value="1"/>
</dbReference>
<dbReference type="FunFam" id="2.30.30.40:FF:000032">
    <property type="entry name" value="Putative C-Jun-amino-terminal kinase-interacting protein 2"/>
    <property type="match status" value="1"/>
</dbReference>
<dbReference type="FunFam" id="2.30.29.30:FF:000306">
    <property type="entry name" value="Uncharacterized protein, isoform A"/>
    <property type="match status" value="1"/>
</dbReference>
<dbReference type="Gene3D" id="2.30.29.30">
    <property type="entry name" value="Pleckstrin-homology domain (PH domain)/Phosphotyrosine-binding domain (PTB)"/>
    <property type="match status" value="1"/>
</dbReference>
<dbReference type="Gene3D" id="2.30.30.40">
    <property type="entry name" value="SH3 Domains"/>
    <property type="match status" value="1"/>
</dbReference>
<dbReference type="InterPro" id="IPR047178">
    <property type="entry name" value="JIP1_scaffold"/>
</dbReference>
<dbReference type="InterPro" id="IPR011993">
    <property type="entry name" value="PH-like_dom_sf"/>
</dbReference>
<dbReference type="InterPro" id="IPR006020">
    <property type="entry name" value="PTB/PI_dom"/>
</dbReference>
<dbReference type="InterPro" id="IPR036028">
    <property type="entry name" value="SH3-like_dom_sf"/>
</dbReference>
<dbReference type="InterPro" id="IPR001452">
    <property type="entry name" value="SH3_domain"/>
</dbReference>
<dbReference type="PANTHER" id="PTHR47437">
    <property type="entry name" value="JNK-INTERACTING PROTEIN 1-LIKE PROTEIN"/>
    <property type="match status" value="1"/>
</dbReference>
<dbReference type="PANTHER" id="PTHR47437:SF4">
    <property type="entry name" value="JNK-INTERACTING PROTEIN 1-LIKE PROTEIN"/>
    <property type="match status" value="1"/>
</dbReference>
<dbReference type="Pfam" id="PF00640">
    <property type="entry name" value="PID"/>
    <property type="match status" value="1"/>
</dbReference>
<dbReference type="Pfam" id="PF14604">
    <property type="entry name" value="SH3_9"/>
    <property type="match status" value="1"/>
</dbReference>
<dbReference type="SMART" id="SM00462">
    <property type="entry name" value="PTB"/>
    <property type="match status" value="1"/>
</dbReference>
<dbReference type="SMART" id="SM00326">
    <property type="entry name" value="SH3"/>
    <property type="match status" value="1"/>
</dbReference>
<dbReference type="SUPFAM" id="SSF50729">
    <property type="entry name" value="PH domain-like"/>
    <property type="match status" value="1"/>
</dbReference>
<dbReference type="SUPFAM" id="SSF50044">
    <property type="entry name" value="SH3-domain"/>
    <property type="match status" value="1"/>
</dbReference>
<dbReference type="PROSITE" id="PS01179">
    <property type="entry name" value="PID"/>
    <property type="match status" value="1"/>
</dbReference>
<dbReference type="PROSITE" id="PS50002">
    <property type="entry name" value="SH3"/>
    <property type="match status" value="1"/>
</dbReference>
<sequence length="490" mass="53816">MADSEFEEFHRPIFEPHTIAGFGSGAGSKKNNPHAFYSLIPNDDLEDSHSSKSDGDGSDQEDGIGLVDHEPKMRQVEDDELGDGLKVTLSSDGSLDTNDSFNSHRHHPLNHQDAIGGFLGMDTSGLGGNSAPVTIGASTDLLAPNTAATRRRRKLPEIPKNKKSSILHLLGGSNFGSLADEFRNGGGGGIPPAVRSGQQRSFLSLKCGYLMDEDSSPDSERMQSLGDVDSGHSTAHSPNDFKSMSPQITSPVSQSPFPPPFGGVPFGQLEMLEATHRGLHKFVPRHHDEIELEIGDAIYVQKEAEDLWCEGVNLRTGRQGIFPSAYAVDLDYNEFDPTVQLVKKERYLLGYLGSVETLAHKGTGVVCQAVRKIVGEYGNSPTGQTCILEVSDQGLRMVDRSGPNQNKKDKKPCIDYFYSLKNVSFCAFHPRDHRFIGFITKHPTVQRFACHVFKGSESTRPVAEAVGRAFQRFYQKFIETAYPIEDIYIE</sequence>
<keyword id="KW-0002">3D-structure</keyword>
<keyword id="KW-0025">Alternative splicing</keyword>
<keyword id="KW-0963">Cytoplasm</keyword>
<keyword id="KW-0217">Developmental protein</keyword>
<keyword id="KW-1185">Reference proteome</keyword>
<keyword id="KW-0728">SH3 domain</keyword>
<evidence type="ECO:0000250" key="1"/>
<evidence type="ECO:0000255" key="2">
    <source>
        <dbReference type="PROSITE-ProRule" id="PRU00148"/>
    </source>
</evidence>
<evidence type="ECO:0000255" key="3">
    <source>
        <dbReference type="PROSITE-ProRule" id="PRU00192"/>
    </source>
</evidence>
<evidence type="ECO:0000256" key="4">
    <source>
        <dbReference type="SAM" id="MobiDB-lite"/>
    </source>
</evidence>
<evidence type="ECO:0000269" key="5">
    <source>
    </source>
</evidence>
<evidence type="ECO:0000303" key="6">
    <source>
    </source>
</evidence>
<evidence type="ECO:0000305" key="7"/>
<evidence type="ECO:0007829" key="8">
    <source>
        <dbReference type="PDB" id="4Z88"/>
    </source>
</evidence>
<proteinExistence type="evidence at protein level"/>
<protein>
    <recommendedName>
        <fullName>JNK-interacting protein 1</fullName>
        <shortName>JIP-1</shortName>
    </recommendedName>
    <alternativeName>
        <fullName>APP-like-interacting protein 1</fullName>
        <shortName>APLIP1</shortName>
    </alternativeName>
    <alternativeName>
        <fullName>Protein eye developmental SP512</fullName>
    </alternativeName>
</protein>
<organism>
    <name type="scientific">Drosophila melanogaster</name>
    <name type="common">Fruit fly</name>
    <dbReference type="NCBI Taxonomy" id="7227"/>
    <lineage>
        <taxon>Eukaryota</taxon>
        <taxon>Metazoa</taxon>
        <taxon>Ecdysozoa</taxon>
        <taxon>Arthropoda</taxon>
        <taxon>Hexapoda</taxon>
        <taxon>Insecta</taxon>
        <taxon>Pterygota</taxon>
        <taxon>Neoptera</taxon>
        <taxon>Endopterygota</taxon>
        <taxon>Diptera</taxon>
        <taxon>Brachycera</taxon>
        <taxon>Muscomorpha</taxon>
        <taxon>Ephydroidea</taxon>
        <taxon>Drosophilidae</taxon>
        <taxon>Drosophila</taxon>
        <taxon>Sophophora</taxon>
    </lineage>
</organism>
<comment type="function">
    <text evidence="1">The JNK-interacting protein (JIP) group of scaffold proteins selectively mediates JNK signaling by aggregating specific components of the MAPK cascade to form a functional JNK signaling module. May function as a regulator of vesicle transport, through interactions with the JNK-signaling components and motor proteins (By similarity).</text>
</comment>
<comment type="subunit">
    <text evidence="5">Forms homo- and heterooligomeric complexes. Binds Hep, a dual specificity protein kinase in the JNK pathway, but not its downstream target bsk. The C-terminal region interacts with the kinesin light chain protein, Klc, and the C-terminal PTY motif of amyloid-beta protein precursor-like protein, Appl.</text>
</comment>
<comment type="interaction">
    <interactant intactId="EBI-74120">
        <id>Q9W0K0</id>
    </interactant>
    <interactant intactId="EBI-74120">
        <id>Q9W0K0</id>
        <label>Aplip1</label>
    </interactant>
    <organismsDiffer>false</organismsDiffer>
    <experiments>2</experiments>
</comment>
<comment type="interaction">
    <interactant intactId="EBI-74120">
        <id>Q9W0K0</id>
    </interactant>
    <interactant intactId="EBI-74135">
        <id>P14599</id>
        <label>Appl</label>
    </interactant>
    <organismsDiffer>false</organismsDiffer>
    <experiments>6</experiments>
</comment>
<comment type="interaction">
    <interactant intactId="EBI-74120">
        <id>Q9W0K0</id>
    </interactant>
    <interactant intactId="EBI-74214">
        <id>Q23977</id>
        <label>hep</label>
    </interactant>
    <organismsDiffer>false</organismsDiffer>
    <experiments>2</experiments>
</comment>
<comment type="subcellular location">
    <subcellularLocation>
        <location evidence="7">Cytoplasm</location>
    </subcellularLocation>
</comment>
<comment type="alternative products">
    <event type="alternative splicing"/>
    <isoform>
        <id>Q9W0K0-1</id>
        <name>B</name>
        <sequence type="displayed"/>
    </isoform>
    <isoform>
        <id>Q9W0K0-2</id>
        <name>A</name>
        <sequence type="described" ref="VSP_009507"/>
    </isoform>
</comment>
<comment type="tissue specificity">
    <text evidence="5">Expressed in the brain, CNS, PNS and cells posterior to the morphogenetic furrow in the eye imaginal disk of late embryos.</text>
</comment>
<comment type="developmental stage">
    <text evidence="5">Expressed from embryonic stage 12 through to adulthood.</text>
</comment>
<comment type="similarity">
    <text evidence="7">Belongs to the JIP scaffold family.</text>
</comment>
<gene>
    <name type="primary">Aplip1</name>
    <name type="synonym">SP512</name>
    <name type="ORF">CG1200</name>
</gene>
<reference key="1">
    <citation type="journal article" date="2002" name="J. Biol. Chem.">
        <title>Interaction of Alzheimer's beta-amyloid precursor family proteins with scaffold proteins of the JNK signaling cascade.</title>
        <authorList>
            <person name="Taru H."/>
            <person name="Iijima K."/>
            <person name="Hase M."/>
            <person name="Kirino Y."/>
            <person name="Yagi Y."/>
            <person name="Suzuki T."/>
        </authorList>
    </citation>
    <scope>NUCLEOTIDE SEQUENCE [MRNA] (ISOFORM B)</scope>
    <scope>TISSUE SPECIFICITY</scope>
    <scope>DEVELOPMENTAL STAGE</scope>
    <scope>INTERACTION WITH APPL; HEP AND KLC</scope>
    <source>
        <tissue>Embryo</tissue>
    </source>
</reference>
<reference key="2">
    <citation type="submission" date="2000-02" db="EMBL/GenBank/DDBJ databases">
        <title>A reverse genetic screen for genes involved in Drosophila eye development.</title>
        <authorList>
            <person name="Serano T.L."/>
            <person name="Pendleton J.D."/>
            <person name="Rubin G.M."/>
        </authorList>
    </citation>
    <scope>NUCLEOTIDE SEQUENCE (ISOFORM B)</scope>
</reference>
<reference key="3">
    <citation type="journal article" date="2000" name="Science">
        <title>The genome sequence of Drosophila melanogaster.</title>
        <authorList>
            <person name="Adams M.D."/>
            <person name="Celniker S.E."/>
            <person name="Holt R.A."/>
            <person name="Evans C.A."/>
            <person name="Gocayne J.D."/>
            <person name="Amanatides P.G."/>
            <person name="Scherer S.E."/>
            <person name="Li P.W."/>
            <person name="Hoskins R.A."/>
            <person name="Galle R.F."/>
            <person name="George R.A."/>
            <person name="Lewis S.E."/>
            <person name="Richards S."/>
            <person name="Ashburner M."/>
            <person name="Henderson S.N."/>
            <person name="Sutton G.G."/>
            <person name="Wortman J.R."/>
            <person name="Yandell M.D."/>
            <person name="Zhang Q."/>
            <person name="Chen L.X."/>
            <person name="Brandon R.C."/>
            <person name="Rogers Y.-H.C."/>
            <person name="Blazej R.G."/>
            <person name="Champe M."/>
            <person name="Pfeiffer B.D."/>
            <person name="Wan K.H."/>
            <person name="Doyle C."/>
            <person name="Baxter E.G."/>
            <person name="Helt G."/>
            <person name="Nelson C.R."/>
            <person name="Miklos G.L.G."/>
            <person name="Abril J.F."/>
            <person name="Agbayani A."/>
            <person name="An H.-J."/>
            <person name="Andrews-Pfannkoch C."/>
            <person name="Baldwin D."/>
            <person name="Ballew R.M."/>
            <person name="Basu A."/>
            <person name="Baxendale J."/>
            <person name="Bayraktaroglu L."/>
            <person name="Beasley E.M."/>
            <person name="Beeson K.Y."/>
            <person name="Benos P.V."/>
            <person name="Berman B.P."/>
            <person name="Bhandari D."/>
            <person name="Bolshakov S."/>
            <person name="Borkova D."/>
            <person name="Botchan M.R."/>
            <person name="Bouck J."/>
            <person name="Brokstein P."/>
            <person name="Brottier P."/>
            <person name="Burtis K.C."/>
            <person name="Busam D.A."/>
            <person name="Butler H."/>
            <person name="Cadieu E."/>
            <person name="Center A."/>
            <person name="Chandra I."/>
            <person name="Cherry J.M."/>
            <person name="Cawley S."/>
            <person name="Dahlke C."/>
            <person name="Davenport L.B."/>
            <person name="Davies P."/>
            <person name="de Pablos B."/>
            <person name="Delcher A."/>
            <person name="Deng Z."/>
            <person name="Mays A.D."/>
            <person name="Dew I."/>
            <person name="Dietz S.M."/>
            <person name="Dodson K."/>
            <person name="Doup L.E."/>
            <person name="Downes M."/>
            <person name="Dugan-Rocha S."/>
            <person name="Dunkov B.C."/>
            <person name="Dunn P."/>
            <person name="Durbin K.J."/>
            <person name="Evangelista C.C."/>
            <person name="Ferraz C."/>
            <person name="Ferriera S."/>
            <person name="Fleischmann W."/>
            <person name="Fosler C."/>
            <person name="Gabrielian A.E."/>
            <person name="Garg N.S."/>
            <person name="Gelbart W.M."/>
            <person name="Glasser K."/>
            <person name="Glodek A."/>
            <person name="Gong F."/>
            <person name="Gorrell J.H."/>
            <person name="Gu Z."/>
            <person name="Guan P."/>
            <person name="Harris M."/>
            <person name="Harris N.L."/>
            <person name="Harvey D.A."/>
            <person name="Heiman T.J."/>
            <person name="Hernandez J.R."/>
            <person name="Houck J."/>
            <person name="Hostin D."/>
            <person name="Houston K.A."/>
            <person name="Howland T.J."/>
            <person name="Wei M.-H."/>
            <person name="Ibegwam C."/>
            <person name="Jalali M."/>
            <person name="Kalush F."/>
            <person name="Karpen G.H."/>
            <person name="Ke Z."/>
            <person name="Kennison J.A."/>
            <person name="Ketchum K.A."/>
            <person name="Kimmel B.E."/>
            <person name="Kodira C.D."/>
            <person name="Kraft C.L."/>
            <person name="Kravitz S."/>
            <person name="Kulp D."/>
            <person name="Lai Z."/>
            <person name="Lasko P."/>
            <person name="Lei Y."/>
            <person name="Levitsky A.A."/>
            <person name="Li J.H."/>
            <person name="Li Z."/>
            <person name="Liang Y."/>
            <person name="Lin X."/>
            <person name="Liu X."/>
            <person name="Mattei B."/>
            <person name="McIntosh T.C."/>
            <person name="McLeod M.P."/>
            <person name="McPherson D."/>
            <person name="Merkulov G."/>
            <person name="Milshina N.V."/>
            <person name="Mobarry C."/>
            <person name="Morris J."/>
            <person name="Moshrefi A."/>
            <person name="Mount S.M."/>
            <person name="Moy M."/>
            <person name="Murphy B."/>
            <person name="Murphy L."/>
            <person name="Muzny D.M."/>
            <person name="Nelson D.L."/>
            <person name="Nelson D.R."/>
            <person name="Nelson K.A."/>
            <person name="Nixon K."/>
            <person name="Nusskern D.R."/>
            <person name="Pacleb J.M."/>
            <person name="Palazzolo M."/>
            <person name="Pittman G.S."/>
            <person name="Pan S."/>
            <person name="Pollard J."/>
            <person name="Puri V."/>
            <person name="Reese M.G."/>
            <person name="Reinert K."/>
            <person name="Remington K."/>
            <person name="Saunders R.D.C."/>
            <person name="Scheeler F."/>
            <person name="Shen H."/>
            <person name="Shue B.C."/>
            <person name="Siden-Kiamos I."/>
            <person name="Simpson M."/>
            <person name="Skupski M.P."/>
            <person name="Smith T.J."/>
            <person name="Spier E."/>
            <person name="Spradling A.C."/>
            <person name="Stapleton M."/>
            <person name="Strong R."/>
            <person name="Sun E."/>
            <person name="Svirskas R."/>
            <person name="Tector C."/>
            <person name="Turner R."/>
            <person name="Venter E."/>
            <person name="Wang A.H."/>
            <person name="Wang X."/>
            <person name="Wang Z.-Y."/>
            <person name="Wassarman D.A."/>
            <person name="Weinstock G.M."/>
            <person name="Weissenbach J."/>
            <person name="Williams S.M."/>
            <person name="Woodage T."/>
            <person name="Worley K.C."/>
            <person name="Wu D."/>
            <person name="Yang S."/>
            <person name="Yao Q.A."/>
            <person name="Ye J."/>
            <person name="Yeh R.-F."/>
            <person name="Zaveri J.S."/>
            <person name="Zhan M."/>
            <person name="Zhang G."/>
            <person name="Zhao Q."/>
            <person name="Zheng L."/>
            <person name="Zheng X.H."/>
            <person name="Zhong F.N."/>
            <person name="Zhong W."/>
            <person name="Zhou X."/>
            <person name="Zhu S.C."/>
            <person name="Zhu X."/>
            <person name="Smith H.O."/>
            <person name="Gibbs R.A."/>
            <person name="Myers E.W."/>
            <person name="Rubin G.M."/>
            <person name="Venter J.C."/>
        </authorList>
    </citation>
    <scope>NUCLEOTIDE SEQUENCE [LARGE SCALE GENOMIC DNA]</scope>
    <source>
        <strain>Berkeley</strain>
    </source>
</reference>
<reference key="4">
    <citation type="journal article" date="2002" name="Genome Biol.">
        <title>Annotation of the Drosophila melanogaster euchromatic genome: a systematic review.</title>
        <authorList>
            <person name="Misra S."/>
            <person name="Crosby M.A."/>
            <person name="Mungall C.J."/>
            <person name="Matthews B.B."/>
            <person name="Campbell K.S."/>
            <person name="Hradecky P."/>
            <person name="Huang Y."/>
            <person name="Kaminker J.S."/>
            <person name="Millburn G.H."/>
            <person name="Prochnik S.E."/>
            <person name="Smith C.D."/>
            <person name="Tupy J.L."/>
            <person name="Whitfield E.J."/>
            <person name="Bayraktaroglu L."/>
            <person name="Berman B.P."/>
            <person name="Bettencourt B.R."/>
            <person name="Celniker S.E."/>
            <person name="de Grey A.D.N.J."/>
            <person name="Drysdale R.A."/>
            <person name="Harris N.L."/>
            <person name="Richter J."/>
            <person name="Russo S."/>
            <person name="Schroeder A.J."/>
            <person name="Shu S.Q."/>
            <person name="Stapleton M."/>
            <person name="Yamada C."/>
            <person name="Ashburner M."/>
            <person name="Gelbart W.M."/>
            <person name="Rubin G.M."/>
            <person name="Lewis S.E."/>
        </authorList>
    </citation>
    <scope>GENOME REANNOTATION</scope>
    <scope>ALTERNATIVE SPLICING</scope>
    <source>
        <strain>Berkeley</strain>
    </source>
</reference>
<reference key="5">
    <citation type="journal article" date="2002" name="Genome Biol.">
        <title>A Drosophila full-length cDNA resource.</title>
        <authorList>
            <person name="Stapleton M."/>
            <person name="Carlson J.W."/>
            <person name="Brokstein P."/>
            <person name="Yu C."/>
            <person name="Champe M."/>
            <person name="George R.A."/>
            <person name="Guarin H."/>
            <person name="Kronmiller B."/>
            <person name="Pacleb J.M."/>
            <person name="Park S."/>
            <person name="Wan K.H."/>
            <person name="Rubin G.M."/>
            <person name="Celniker S.E."/>
        </authorList>
    </citation>
    <scope>NUCLEOTIDE SEQUENCE [LARGE SCALE MRNA] (ISOFORMS A AND B)</scope>
    <source>
        <strain>Berkeley</strain>
        <tissue>Head</tissue>
    </source>
</reference>
<feature type="chain" id="PRO_0000220635" description="JNK-interacting protein 1">
    <location>
        <begin position="1"/>
        <end position="490"/>
    </location>
</feature>
<feature type="domain" description="SH3" evidence="3">
    <location>
        <begin position="271"/>
        <end position="332"/>
    </location>
</feature>
<feature type="domain" description="PID" evidence="2">
    <location>
        <begin position="344"/>
        <end position="479"/>
    </location>
</feature>
<feature type="region of interest" description="Disordered" evidence="4">
    <location>
        <begin position="1"/>
        <end position="71"/>
    </location>
</feature>
<feature type="region of interest" description="Disordered" evidence="4">
    <location>
        <begin position="213"/>
        <end position="254"/>
    </location>
</feature>
<feature type="compositionally biased region" description="Polar residues" evidence="4">
    <location>
        <begin position="231"/>
        <end position="249"/>
    </location>
</feature>
<feature type="splice variant" id="VSP_009507" description="In isoform A." evidence="6">
    <original>SSILHLLG</original>
    <variation>C</variation>
    <location>
        <begin position="164"/>
        <end position="171"/>
    </location>
</feature>
<feature type="turn" evidence="8">
    <location>
        <begin position="160"/>
        <end position="162"/>
    </location>
</feature>
<name>JIP1_DROME</name>